<keyword id="KW-0963">Cytoplasm</keyword>
<keyword id="KW-0489">Methyltransferase</keyword>
<keyword id="KW-0698">rRNA processing</keyword>
<keyword id="KW-0949">S-adenosyl-L-methionine</keyword>
<keyword id="KW-0808">Transferase</keyword>
<sequence>MIPSELEPEFLHIPVLSQAVIQGLNLRPGGHYLDATVGGGGHSRLILEAAPESQVTALDRDQQALQAARSALQPYGERVQFYQSNFADYESGSLRFDGILADLGVSSAQLDQPQRGFSFRADAPLDMRMDQRQSLTAAELVNTASAEELADIFYYYGEERFARRIARRIVQHRPLYTTAQLASLVSRALPSRSQSIHPATRVFQALRIAVNRELESLEQFLERSPHWLVTGGRLAVISFHSLEDRRVKHGLRDHSLLQVLTKKPILPSSEEISANPRARSAKLRLAQRLDALEG</sequence>
<proteinExistence type="inferred from homology"/>
<evidence type="ECO:0000255" key="1">
    <source>
        <dbReference type="HAMAP-Rule" id="MF_01007"/>
    </source>
</evidence>
<gene>
    <name evidence="1" type="primary">rsmH</name>
    <name type="synonym">mraW</name>
    <name type="ordered locus">Cyan7425_3751</name>
</gene>
<accession>B8HTI9</accession>
<name>RSMH_CYAP4</name>
<feature type="chain" id="PRO_0000386838" description="Ribosomal RNA small subunit methyltransferase H">
    <location>
        <begin position="1"/>
        <end position="294"/>
    </location>
</feature>
<feature type="binding site" evidence="1">
    <location>
        <begin position="40"/>
        <end position="42"/>
    </location>
    <ligand>
        <name>S-adenosyl-L-methionine</name>
        <dbReference type="ChEBI" id="CHEBI:59789"/>
    </ligand>
</feature>
<feature type="binding site" evidence="1">
    <location>
        <position position="59"/>
    </location>
    <ligand>
        <name>S-adenosyl-L-methionine</name>
        <dbReference type="ChEBI" id="CHEBI:59789"/>
    </ligand>
</feature>
<feature type="binding site" evidence="1">
    <location>
        <position position="86"/>
    </location>
    <ligand>
        <name>S-adenosyl-L-methionine</name>
        <dbReference type="ChEBI" id="CHEBI:59789"/>
    </ligand>
</feature>
<feature type="binding site" evidence="1">
    <location>
        <position position="102"/>
    </location>
    <ligand>
        <name>S-adenosyl-L-methionine</name>
        <dbReference type="ChEBI" id="CHEBI:59789"/>
    </ligand>
</feature>
<feature type="binding site" evidence="1">
    <location>
        <position position="109"/>
    </location>
    <ligand>
        <name>S-adenosyl-L-methionine</name>
        <dbReference type="ChEBI" id="CHEBI:59789"/>
    </ligand>
</feature>
<protein>
    <recommendedName>
        <fullName evidence="1">Ribosomal RNA small subunit methyltransferase H</fullName>
        <ecNumber evidence="1">2.1.1.199</ecNumber>
    </recommendedName>
    <alternativeName>
        <fullName evidence="1">16S rRNA m(4)C1402 methyltransferase</fullName>
    </alternativeName>
    <alternativeName>
        <fullName evidence="1">rRNA (cytosine-N(4)-)-methyltransferase RsmH</fullName>
    </alternativeName>
</protein>
<comment type="function">
    <text evidence="1">Specifically methylates the N4 position of cytidine in position 1402 (C1402) of 16S rRNA.</text>
</comment>
<comment type="catalytic activity">
    <reaction evidence="1">
        <text>cytidine(1402) in 16S rRNA + S-adenosyl-L-methionine = N(4)-methylcytidine(1402) in 16S rRNA + S-adenosyl-L-homocysteine + H(+)</text>
        <dbReference type="Rhea" id="RHEA:42928"/>
        <dbReference type="Rhea" id="RHEA-COMP:10286"/>
        <dbReference type="Rhea" id="RHEA-COMP:10287"/>
        <dbReference type="ChEBI" id="CHEBI:15378"/>
        <dbReference type="ChEBI" id="CHEBI:57856"/>
        <dbReference type="ChEBI" id="CHEBI:59789"/>
        <dbReference type="ChEBI" id="CHEBI:74506"/>
        <dbReference type="ChEBI" id="CHEBI:82748"/>
        <dbReference type="EC" id="2.1.1.199"/>
    </reaction>
</comment>
<comment type="subcellular location">
    <subcellularLocation>
        <location evidence="1">Cytoplasm</location>
    </subcellularLocation>
</comment>
<comment type="similarity">
    <text evidence="1">Belongs to the methyltransferase superfamily. RsmH family.</text>
</comment>
<dbReference type="EC" id="2.1.1.199" evidence="1"/>
<dbReference type="EMBL" id="CP001344">
    <property type="protein sequence ID" value="ACL46070.1"/>
    <property type="molecule type" value="Genomic_DNA"/>
</dbReference>
<dbReference type="SMR" id="B8HTI9"/>
<dbReference type="STRING" id="395961.Cyan7425_3751"/>
<dbReference type="KEGG" id="cyn:Cyan7425_3751"/>
<dbReference type="eggNOG" id="COG0275">
    <property type="taxonomic scope" value="Bacteria"/>
</dbReference>
<dbReference type="HOGENOM" id="CLU_038422_3_0_3"/>
<dbReference type="OrthoDB" id="9806637at2"/>
<dbReference type="GO" id="GO:0005737">
    <property type="term" value="C:cytoplasm"/>
    <property type="evidence" value="ECO:0007669"/>
    <property type="project" value="UniProtKB-SubCell"/>
</dbReference>
<dbReference type="GO" id="GO:0071424">
    <property type="term" value="F:rRNA (cytosine-N4-)-methyltransferase activity"/>
    <property type="evidence" value="ECO:0007669"/>
    <property type="project" value="UniProtKB-UniRule"/>
</dbReference>
<dbReference type="GO" id="GO:0070475">
    <property type="term" value="P:rRNA base methylation"/>
    <property type="evidence" value="ECO:0007669"/>
    <property type="project" value="UniProtKB-UniRule"/>
</dbReference>
<dbReference type="CDD" id="cd02440">
    <property type="entry name" value="AdoMet_MTases"/>
    <property type="match status" value="1"/>
</dbReference>
<dbReference type="FunFam" id="1.10.150.170:FF:000003">
    <property type="entry name" value="Ribosomal RNA small subunit methyltransferase H"/>
    <property type="match status" value="1"/>
</dbReference>
<dbReference type="Gene3D" id="1.10.150.170">
    <property type="entry name" value="Putative methyltransferase TM0872, insert domain"/>
    <property type="match status" value="1"/>
</dbReference>
<dbReference type="Gene3D" id="3.40.50.150">
    <property type="entry name" value="Vaccinia Virus protein VP39"/>
    <property type="match status" value="1"/>
</dbReference>
<dbReference type="HAMAP" id="MF_01007">
    <property type="entry name" value="16SrRNA_methyltr_H"/>
    <property type="match status" value="1"/>
</dbReference>
<dbReference type="InterPro" id="IPR002903">
    <property type="entry name" value="RsmH"/>
</dbReference>
<dbReference type="InterPro" id="IPR023397">
    <property type="entry name" value="SAM-dep_MeTrfase_MraW_recog"/>
</dbReference>
<dbReference type="InterPro" id="IPR029063">
    <property type="entry name" value="SAM-dependent_MTases_sf"/>
</dbReference>
<dbReference type="NCBIfam" id="TIGR00006">
    <property type="entry name" value="16S rRNA (cytosine(1402)-N(4))-methyltransferase RsmH"/>
    <property type="match status" value="1"/>
</dbReference>
<dbReference type="PANTHER" id="PTHR11265:SF0">
    <property type="entry name" value="12S RRNA N4-METHYLCYTIDINE METHYLTRANSFERASE"/>
    <property type="match status" value="1"/>
</dbReference>
<dbReference type="PANTHER" id="PTHR11265">
    <property type="entry name" value="S-ADENOSYL-METHYLTRANSFERASE MRAW"/>
    <property type="match status" value="1"/>
</dbReference>
<dbReference type="Pfam" id="PF01795">
    <property type="entry name" value="Methyltransf_5"/>
    <property type="match status" value="1"/>
</dbReference>
<dbReference type="PIRSF" id="PIRSF004486">
    <property type="entry name" value="MraW"/>
    <property type="match status" value="1"/>
</dbReference>
<dbReference type="SUPFAM" id="SSF81799">
    <property type="entry name" value="Putative methyltransferase TM0872, insert domain"/>
    <property type="match status" value="1"/>
</dbReference>
<dbReference type="SUPFAM" id="SSF53335">
    <property type="entry name" value="S-adenosyl-L-methionine-dependent methyltransferases"/>
    <property type="match status" value="1"/>
</dbReference>
<reference key="1">
    <citation type="journal article" date="2011" name="MBio">
        <title>Novel metabolic attributes of the genus Cyanothece, comprising a group of unicellular nitrogen-fixing Cyanobacteria.</title>
        <authorList>
            <person name="Bandyopadhyay A."/>
            <person name="Elvitigala T."/>
            <person name="Welsh E."/>
            <person name="Stockel J."/>
            <person name="Liberton M."/>
            <person name="Min H."/>
            <person name="Sherman L.A."/>
            <person name="Pakrasi H.B."/>
        </authorList>
    </citation>
    <scope>NUCLEOTIDE SEQUENCE [LARGE SCALE GENOMIC DNA]</scope>
    <source>
        <strain>PCC 7425 / ATCC 29141</strain>
    </source>
</reference>
<organism>
    <name type="scientific">Cyanothece sp. (strain PCC 7425 / ATCC 29141)</name>
    <dbReference type="NCBI Taxonomy" id="395961"/>
    <lineage>
        <taxon>Bacteria</taxon>
        <taxon>Bacillati</taxon>
        <taxon>Cyanobacteriota</taxon>
        <taxon>Cyanophyceae</taxon>
        <taxon>Gomontiellales</taxon>
        <taxon>Cyanothecaceae</taxon>
        <taxon>Cyanothece</taxon>
    </lineage>
</organism>